<reference key="1">
    <citation type="journal article" date="1999" name="Nature">
        <title>Sequence and analysis of chromosome 4 of the plant Arabidopsis thaliana.</title>
        <authorList>
            <person name="Mayer K.F.X."/>
            <person name="Schueller C."/>
            <person name="Wambutt R."/>
            <person name="Murphy G."/>
            <person name="Volckaert G."/>
            <person name="Pohl T."/>
            <person name="Duesterhoeft A."/>
            <person name="Stiekema W."/>
            <person name="Entian K.-D."/>
            <person name="Terryn N."/>
            <person name="Harris B."/>
            <person name="Ansorge W."/>
            <person name="Brandt P."/>
            <person name="Grivell L.A."/>
            <person name="Rieger M."/>
            <person name="Weichselgartner M."/>
            <person name="de Simone V."/>
            <person name="Obermaier B."/>
            <person name="Mache R."/>
            <person name="Mueller M."/>
            <person name="Kreis M."/>
            <person name="Delseny M."/>
            <person name="Puigdomenech P."/>
            <person name="Watson M."/>
            <person name="Schmidtheini T."/>
            <person name="Reichert B."/>
            <person name="Portetelle D."/>
            <person name="Perez-Alonso M."/>
            <person name="Boutry M."/>
            <person name="Bancroft I."/>
            <person name="Vos P."/>
            <person name="Hoheisel J."/>
            <person name="Zimmermann W."/>
            <person name="Wedler H."/>
            <person name="Ridley P."/>
            <person name="Langham S.-A."/>
            <person name="McCullagh B."/>
            <person name="Bilham L."/>
            <person name="Robben J."/>
            <person name="van der Schueren J."/>
            <person name="Grymonprez B."/>
            <person name="Chuang Y.-J."/>
            <person name="Vandenbussche F."/>
            <person name="Braeken M."/>
            <person name="Weltjens I."/>
            <person name="Voet M."/>
            <person name="Bastiaens I."/>
            <person name="Aert R."/>
            <person name="Defoor E."/>
            <person name="Weitzenegger T."/>
            <person name="Bothe G."/>
            <person name="Ramsperger U."/>
            <person name="Hilbert H."/>
            <person name="Braun M."/>
            <person name="Holzer E."/>
            <person name="Brandt A."/>
            <person name="Peters S."/>
            <person name="van Staveren M."/>
            <person name="Dirkse W."/>
            <person name="Mooijman P."/>
            <person name="Klein Lankhorst R."/>
            <person name="Rose M."/>
            <person name="Hauf J."/>
            <person name="Koetter P."/>
            <person name="Berneiser S."/>
            <person name="Hempel S."/>
            <person name="Feldpausch M."/>
            <person name="Lamberth S."/>
            <person name="Van den Daele H."/>
            <person name="De Keyser A."/>
            <person name="Buysshaert C."/>
            <person name="Gielen J."/>
            <person name="Villarroel R."/>
            <person name="De Clercq R."/>
            <person name="van Montagu M."/>
            <person name="Rogers J."/>
            <person name="Cronin A."/>
            <person name="Quail M.A."/>
            <person name="Bray-Allen S."/>
            <person name="Clark L."/>
            <person name="Doggett J."/>
            <person name="Hall S."/>
            <person name="Kay M."/>
            <person name="Lennard N."/>
            <person name="McLay K."/>
            <person name="Mayes R."/>
            <person name="Pettett A."/>
            <person name="Rajandream M.A."/>
            <person name="Lyne M."/>
            <person name="Benes V."/>
            <person name="Rechmann S."/>
            <person name="Borkova D."/>
            <person name="Bloecker H."/>
            <person name="Scharfe M."/>
            <person name="Grimm M."/>
            <person name="Loehnert T.-H."/>
            <person name="Dose S."/>
            <person name="de Haan M."/>
            <person name="Maarse A.C."/>
            <person name="Schaefer M."/>
            <person name="Mueller-Auer S."/>
            <person name="Gabel C."/>
            <person name="Fuchs M."/>
            <person name="Fartmann B."/>
            <person name="Granderath K."/>
            <person name="Dauner D."/>
            <person name="Herzl A."/>
            <person name="Neumann S."/>
            <person name="Argiriou A."/>
            <person name="Vitale D."/>
            <person name="Liguori R."/>
            <person name="Piravandi E."/>
            <person name="Massenet O."/>
            <person name="Quigley F."/>
            <person name="Clabauld G."/>
            <person name="Muendlein A."/>
            <person name="Felber R."/>
            <person name="Schnabl S."/>
            <person name="Hiller R."/>
            <person name="Schmidt W."/>
            <person name="Lecharny A."/>
            <person name="Aubourg S."/>
            <person name="Chefdor F."/>
            <person name="Cooke R."/>
            <person name="Berger C."/>
            <person name="Monfort A."/>
            <person name="Casacuberta E."/>
            <person name="Gibbons T."/>
            <person name="Weber N."/>
            <person name="Vandenbol M."/>
            <person name="Bargues M."/>
            <person name="Terol J."/>
            <person name="Torres A."/>
            <person name="Perez-Perez A."/>
            <person name="Purnelle B."/>
            <person name="Bent E."/>
            <person name="Johnson S."/>
            <person name="Tacon D."/>
            <person name="Jesse T."/>
            <person name="Heijnen L."/>
            <person name="Schwarz S."/>
            <person name="Scholler P."/>
            <person name="Heber S."/>
            <person name="Francs P."/>
            <person name="Bielke C."/>
            <person name="Frishman D."/>
            <person name="Haase D."/>
            <person name="Lemcke K."/>
            <person name="Mewes H.-W."/>
            <person name="Stocker S."/>
            <person name="Zaccaria P."/>
            <person name="Bevan M."/>
            <person name="Wilson R.K."/>
            <person name="de la Bastide M."/>
            <person name="Habermann K."/>
            <person name="Parnell L."/>
            <person name="Dedhia N."/>
            <person name="Gnoj L."/>
            <person name="Schutz K."/>
            <person name="Huang E."/>
            <person name="Spiegel L."/>
            <person name="Sekhon M."/>
            <person name="Murray J."/>
            <person name="Sheet P."/>
            <person name="Cordes M."/>
            <person name="Abu-Threideh J."/>
            <person name="Stoneking T."/>
            <person name="Kalicki J."/>
            <person name="Graves T."/>
            <person name="Harmon G."/>
            <person name="Edwards J."/>
            <person name="Latreille P."/>
            <person name="Courtney L."/>
            <person name="Cloud J."/>
            <person name="Abbott A."/>
            <person name="Scott K."/>
            <person name="Johnson D."/>
            <person name="Minx P."/>
            <person name="Bentley D."/>
            <person name="Fulton B."/>
            <person name="Miller N."/>
            <person name="Greco T."/>
            <person name="Kemp K."/>
            <person name="Kramer J."/>
            <person name="Fulton L."/>
            <person name="Mardis E."/>
            <person name="Dante M."/>
            <person name="Pepin K."/>
            <person name="Hillier L.W."/>
            <person name="Nelson J."/>
            <person name="Spieth J."/>
            <person name="Ryan E."/>
            <person name="Andrews S."/>
            <person name="Geisel C."/>
            <person name="Layman D."/>
            <person name="Du H."/>
            <person name="Ali J."/>
            <person name="Berghoff A."/>
            <person name="Jones K."/>
            <person name="Drone K."/>
            <person name="Cotton M."/>
            <person name="Joshu C."/>
            <person name="Antonoiu B."/>
            <person name="Zidanic M."/>
            <person name="Strong C."/>
            <person name="Sun H."/>
            <person name="Lamar B."/>
            <person name="Yordan C."/>
            <person name="Ma P."/>
            <person name="Zhong J."/>
            <person name="Preston R."/>
            <person name="Vil D."/>
            <person name="Shekher M."/>
            <person name="Matero A."/>
            <person name="Shah R."/>
            <person name="Swaby I.K."/>
            <person name="O'Shaughnessy A."/>
            <person name="Rodriguez M."/>
            <person name="Hoffman J."/>
            <person name="Till S."/>
            <person name="Granat S."/>
            <person name="Shohdy N."/>
            <person name="Hasegawa A."/>
            <person name="Hameed A."/>
            <person name="Lodhi M."/>
            <person name="Johnson A."/>
            <person name="Chen E."/>
            <person name="Marra M.A."/>
            <person name="Martienssen R."/>
            <person name="McCombie W.R."/>
        </authorList>
    </citation>
    <scope>NUCLEOTIDE SEQUENCE [LARGE SCALE GENOMIC DNA]</scope>
    <source>
        <strain>cv. Columbia</strain>
    </source>
</reference>
<reference key="2">
    <citation type="journal article" date="2017" name="Plant J.">
        <title>Araport11: a complete reannotation of the Arabidopsis thaliana reference genome.</title>
        <authorList>
            <person name="Cheng C.Y."/>
            <person name="Krishnakumar V."/>
            <person name="Chan A.P."/>
            <person name="Thibaud-Nissen F."/>
            <person name="Schobel S."/>
            <person name="Town C.D."/>
        </authorList>
    </citation>
    <scope>GENOME REANNOTATION</scope>
    <source>
        <strain>cv. Columbia</strain>
    </source>
</reference>
<reference key="3">
    <citation type="journal article" date="2002" name="Plant Physiol.">
        <title>Inositol phospholipid metabolism in Arabidopsis. Characterized and putative isoforms of inositol phospholipid kinase and phosphoinositide-specific phospholipase C.</title>
        <authorList>
            <person name="Mueller-Roeber B."/>
            <person name="Pical C."/>
        </authorList>
    </citation>
    <scope>GENE FAMILY</scope>
    <scope>NOMENCLATURE</scope>
</reference>
<protein>
    <recommendedName>
        <fullName>Putative phosphatidylinositol 4-phosphate 5-kinase 11</fullName>
        <shortName>AtPIP5K11</shortName>
        <ecNumber>2.7.1.68</ecNumber>
    </recommendedName>
    <alternativeName>
        <fullName>1-phosphatidylinositol 4-phosphate kinase 11</fullName>
    </alternativeName>
    <alternativeName>
        <fullName>Diphosphoinositide kinase 11</fullName>
    </alternativeName>
    <alternativeName>
        <fullName>PtdIns(4)P-5-kinase 11</fullName>
    </alternativeName>
</protein>
<sequence length="401" mass="45659">MELRATVENRIRYSTKHIKHLPPGSITEFDWKDYCPVGFGLIQELEGIDHDDYLLSICTDETLKKISSGKIGNVFHISNDNRFLIKILRKSEIKVTLEMLPRYYRHINYHRSSLFTRIFGAHSVKPLGGVKTYFAVMSNMLHSTIFVNKLYDLKGSPKGRSNKKIEVRNTTVLKDIDFDFCFYVDPLARQRIIKQTKLDCELLEEEGIMDYSLLVGLQSKGSCQGSLDGLNPVYGSFAPPSSFKSNSTKSMKTASSSPDRSSVAMYSCSPDRDSVENEMSMTIQSVTSNSASSETNILATTLSDLFHNSSNINFGMKIPARARRVTRETGEEEWYNVVLYIGIVDTFQDYGMKKRIEHCYKSIQYNSNSISTVHPKIYSSRFQDFVSNIFLPHDDDLSSKY</sequence>
<evidence type="ECO:0000250" key="1"/>
<evidence type="ECO:0000255" key="2">
    <source>
        <dbReference type="PROSITE-ProRule" id="PRU00781"/>
    </source>
</evidence>
<evidence type="ECO:0000256" key="3">
    <source>
        <dbReference type="SAM" id="MobiDB-lite"/>
    </source>
</evidence>
<evidence type="ECO:0000305" key="4"/>
<proteinExistence type="predicted"/>
<keyword id="KW-0067">ATP-binding</keyword>
<keyword id="KW-0418">Kinase</keyword>
<keyword id="KW-0547">Nucleotide-binding</keyword>
<keyword id="KW-1185">Reference proteome</keyword>
<keyword id="KW-0808">Transferase</keyword>
<feature type="chain" id="PRO_0000185483" description="Putative phosphatidylinositol 4-phosphate 5-kinase 11">
    <location>
        <begin position="1"/>
        <end position="401"/>
    </location>
</feature>
<feature type="domain" description="PIPK" evidence="2">
    <location>
        <begin position="1"/>
        <end position="390"/>
    </location>
</feature>
<feature type="region of interest" description="Disordered" evidence="3">
    <location>
        <begin position="242"/>
        <end position="268"/>
    </location>
</feature>
<feature type="region of interest" description="Activation loop" evidence="1">
    <location>
        <begin position="350"/>
        <end position="371"/>
    </location>
</feature>
<feature type="compositionally biased region" description="Polar residues" evidence="3">
    <location>
        <begin position="242"/>
        <end position="260"/>
    </location>
</feature>
<name>PI5KB_ARATH</name>
<dbReference type="EC" id="2.7.1.68"/>
<dbReference type="EMBL" id="AF007269">
    <property type="protein sequence ID" value="AAB61030.1"/>
    <property type="status" value="ALT_SEQ"/>
    <property type="molecule type" value="Genomic_DNA"/>
</dbReference>
<dbReference type="EMBL" id="AL161491">
    <property type="protein sequence ID" value="CAB80928.1"/>
    <property type="molecule type" value="Genomic_DNA"/>
</dbReference>
<dbReference type="EMBL" id="CP002687">
    <property type="protein sequence ID" value="AEE81992.1"/>
    <property type="molecule type" value="Genomic_DNA"/>
</dbReference>
<dbReference type="PIR" id="F85015">
    <property type="entry name" value="F85015"/>
</dbReference>
<dbReference type="PIR" id="T01723">
    <property type="entry name" value="T01723"/>
</dbReference>
<dbReference type="RefSeq" id="NP_192028.1">
    <property type="nucleotide sequence ID" value="NM_116349.1"/>
</dbReference>
<dbReference type="SMR" id="Q9M149"/>
<dbReference type="BioGRID" id="13357">
    <property type="interactions" value="4"/>
</dbReference>
<dbReference type="FunCoup" id="Q9M149">
    <property type="interactions" value="245"/>
</dbReference>
<dbReference type="STRING" id="3702.Q9M149"/>
<dbReference type="PaxDb" id="3702-AT4G01190.1"/>
<dbReference type="EnsemblPlants" id="AT4G01190.1">
    <property type="protein sequence ID" value="AT4G01190.1"/>
    <property type="gene ID" value="AT4G01190"/>
</dbReference>
<dbReference type="GeneID" id="828066"/>
<dbReference type="Gramene" id="AT4G01190.1">
    <property type="protein sequence ID" value="AT4G01190.1"/>
    <property type="gene ID" value="AT4G01190"/>
</dbReference>
<dbReference type="KEGG" id="ath:AT4G01190"/>
<dbReference type="Araport" id="AT4G01190"/>
<dbReference type="TAIR" id="AT4G01190">
    <property type="gene designation" value="PIPK10"/>
</dbReference>
<dbReference type="eggNOG" id="KOG0229">
    <property type="taxonomic scope" value="Eukaryota"/>
</dbReference>
<dbReference type="HOGENOM" id="CLU_004312_6_3_1"/>
<dbReference type="InParanoid" id="Q9M149"/>
<dbReference type="OMA" id="TMYSCSP"/>
<dbReference type="PhylomeDB" id="Q9M149"/>
<dbReference type="BioCyc" id="ARA:AT4G01190-MONOMER"/>
<dbReference type="PRO" id="PR:Q9M149"/>
<dbReference type="Proteomes" id="UP000006548">
    <property type="component" value="Chromosome 4"/>
</dbReference>
<dbReference type="ExpressionAtlas" id="Q9M149">
    <property type="expression patterns" value="baseline and differential"/>
</dbReference>
<dbReference type="GO" id="GO:0016308">
    <property type="term" value="F:1-phosphatidylinositol-4-phosphate 5-kinase activity"/>
    <property type="evidence" value="ECO:0000314"/>
    <property type="project" value="TAIR"/>
</dbReference>
<dbReference type="GO" id="GO:0005524">
    <property type="term" value="F:ATP binding"/>
    <property type="evidence" value="ECO:0007669"/>
    <property type="project" value="UniProtKB-KW"/>
</dbReference>
<dbReference type="GO" id="GO:0046488">
    <property type="term" value="P:phosphatidylinositol metabolic process"/>
    <property type="evidence" value="ECO:0007669"/>
    <property type="project" value="InterPro"/>
</dbReference>
<dbReference type="Gene3D" id="3.30.810.10">
    <property type="entry name" value="2-Layer Sandwich"/>
    <property type="match status" value="1"/>
</dbReference>
<dbReference type="Gene3D" id="3.30.800.10">
    <property type="entry name" value="Phosphatidylinositol Phosphate Kinase II Beta"/>
    <property type="match status" value="1"/>
</dbReference>
<dbReference type="InterPro" id="IPR027483">
    <property type="entry name" value="PInositol-4-P-4/5-kinase_C_sf"/>
</dbReference>
<dbReference type="InterPro" id="IPR002498">
    <property type="entry name" value="PInositol-4-P-4/5-kinase_core"/>
</dbReference>
<dbReference type="InterPro" id="IPR027484">
    <property type="entry name" value="PInositol-4-P-5-kinase_N"/>
</dbReference>
<dbReference type="InterPro" id="IPR023610">
    <property type="entry name" value="PInositol-4/5-P-5/4-kinase"/>
</dbReference>
<dbReference type="PANTHER" id="PTHR23086:SF109">
    <property type="entry name" value="PHOSPHATIDYLINOSITOL 4-PHOSPHATE 5-KINASE 11-RELATED"/>
    <property type="match status" value="1"/>
</dbReference>
<dbReference type="PANTHER" id="PTHR23086">
    <property type="entry name" value="PHOSPHATIDYLINOSITOL-4-PHOSPHATE 5-KINASE"/>
    <property type="match status" value="1"/>
</dbReference>
<dbReference type="Pfam" id="PF01504">
    <property type="entry name" value="PIP5K"/>
    <property type="match status" value="1"/>
</dbReference>
<dbReference type="SMART" id="SM00330">
    <property type="entry name" value="PIPKc"/>
    <property type="match status" value="1"/>
</dbReference>
<dbReference type="SUPFAM" id="SSF56104">
    <property type="entry name" value="SAICAR synthase-like"/>
    <property type="match status" value="1"/>
</dbReference>
<dbReference type="PROSITE" id="PS51455">
    <property type="entry name" value="PIPK"/>
    <property type="match status" value="1"/>
</dbReference>
<organism>
    <name type="scientific">Arabidopsis thaliana</name>
    <name type="common">Mouse-ear cress</name>
    <dbReference type="NCBI Taxonomy" id="3702"/>
    <lineage>
        <taxon>Eukaryota</taxon>
        <taxon>Viridiplantae</taxon>
        <taxon>Streptophyta</taxon>
        <taxon>Embryophyta</taxon>
        <taxon>Tracheophyta</taxon>
        <taxon>Spermatophyta</taxon>
        <taxon>Magnoliopsida</taxon>
        <taxon>eudicotyledons</taxon>
        <taxon>Gunneridae</taxon>
        <taxon>Pentapetalae</taxon>
        <taxon>rosids</taxon>
        <taxon>malvids</taxon>
        <taxon>Brassicales</taxon>
        <taxon>Brassicaceae</taxon>
        <taxon>Camelineae</taxon>
        <taxon>Arabidopsis</taxon>
    </lineage>
</organism>
<accession>Q9M149</accession>
<accession>O04613</accession>
<comment type="catalytic activity">
    <reaction>
        <text>a 1,2-diacyl-sn-glycero-3-phospho-(1D-myo-inositol 4-phosphate) + ATP = a 1,2-diacyl-sn-glycero-3-phospho-(1D-myo-inositol-4,5-bisphosphate) + ADP + H(+)</text>
        <dbReference type="Rhea" id="RHEA:14425"/>
        <dbReference type="ChEBI" id="CHEBI:15378"/>
        <dbReference type="ChEBI" id="CHEBI:30616"/>
        <dbReference type="ChEBI" id="CHEBI:58178"/>
        <dbReference type="ChEBI" id="CHEBI:58456"/>
        <dbReference type="ChEBI" id="CHEBI:456216"/>
        <dbReference type="EC" id="2.7.1.68"/>
    </reaction>
</comment>
<comment type="sequence caution" evidence="4">
    <conflict type="erroneous gene model prediction">
        <sequence resource="EMBL-CDS" id="AAB61030"/>
    </conflict>
</comment>
<gene>
    <name type="primary">PIP5K11</name>
    <name type="ordered locus">At4g01190</name>
    <name type="ORF">F2N1.9</name>
</gene>